<reference key="1">
    <citation type="journal article" date="2002" name="Biochem. Biophys. Res. Commun.">
        <title>Identification of rat EMAP, a delta-glutamate receptor binding protein.</title>
        <authorList>
            <person name="Ly C.D."/>
            <person name="Roche K.W."/>
            <person name="Lee H.K."/>
            <person name="Wenthold R.J."/>
        </authorList>
    </citation>
    <scope>NUCLEOTIDE SEQUENCE [MRNA] (ISOFORM 2)</scope>
    <scope>INTERACTION WITH GRID1 AND GRID2</scope>
    <scope>TISSUE SPECIFICITY</scope>
    <source>
        <tissue>Brain</tissue>
    </source>
</reference>
<reference key="2">
    <citation type="journal article" date="2004" name="Genome Res.">
        <title>The status, quality, and expansion of the NIH full-length cDNA project: the Mammalian Gene Collection (MGC).</title>
        <authorList>
            <consortium name="The MGC Project Team"/>
        </authorList>
    </citation>
    <scope>NUCLEOTIDE SEQUENCE [LARGE SCALE MRNA] (ISOFORM 1)</scope>
    <source>
        <tissue>Prostate</tissue>
    </source>
</reference>
<accession>Q6P6T4</accession>
<accession>Q8VIM8</accession>
<proteinExistence type="evidence at protein level"/>
<evidence type="ECO:0000250" key="1"/>
<evidence type="ECO:0000250" key="2">
    <source>
        <dbReference type="UniProtKB" id="O95834"/>
    </source>
</evidence>
<evidence type="ECO:0000269" key="3">
    <source>
    </source>
</evidence>
<evidence type="ECO:0000303" key="4">
    <source>
    </source>
</evidence>
<evidence type="ECO:0000305" key="5"/>
<sequence>MSSFGTGKTKEVIFSMEEGSVKMFLRGRPVPMLIPDELAPTYSLDTRSELPSSRLKLDWVYGYRGRDCRANLYLLPTGEVVYFVASVAVLYSVEEQRQRHYLGHNDDIKCLAVHPDMVTIATGQVAGTTKEGKPLPPHVRVWDSVSLSTLHVLGLGVFDRAVCCVAFSKSNGGNLLCAVDESNDHVLSVWDWAKESKVVDSKCSNEAVLVATFHPTDPNLLITCGKSHIYFWSLEGGNLSKRQGLFEKHEKPKYVLCVTFLEGGDVVTGDSGGNLYVWGKGGNRITQEVLGAHDGGVFALCALRDGTLVSGGGRDRRVVLWGSDYSKVQEVEVPEDFGPVRTVAEGRGDTLYVGTTRNSILLGSVHTGFSLLVQGHVEELWGLATHPSRAQFVSCGQDKLVHLWSSETHQPVWSRSIEDPARSAGFHPSGSVLAVGTVTGRWLLLDTDTRDLVAIHTDGNEQISVVSFSPDGAYLAVGSHDNLVYVYTVDQGGRKVSRLGKCSGHSSFITHLDWAQDSTCFVTNSGDYEILYWDAATCKQITSADTVRNVQWATATCVLGFGVFGIWPEGADGTDINAVARSHDGNLLVSADDFGKVHLFSYPCCQPRALSHKYGGHSSHVTNVAFLWDDSMVLTTGGKDTSVLQWRVA</sequence>
<organism>
    <name type="scientific">Rattus norvegicus</name>
    <name type="common">Rat</name>
    <dbReference type="NCBI Taxonomy" id="10116"/>
    <lineage>
        <taxon>Eukaryota</taxon>
        <taxon>Metazoa</taxon>
        <taxon>Chordata</taxon>
        <taxon>Craniata</taxon>
        <taxon>Vertebrata</taxon>
        <taxon>Euteleostomi</taxon>
        <taxon>Mammalia</taxon>
        <taxon>Eutheria</taxon>
        <taxon>Euarchontoglires</taxon>
        <taxon>Glires</taxon>
        <taxon>Rodentia</taxon>
        <taxon>Myomorpha</taxon>
        <taxon>Muroidea</taxon>
        <taxon>Muridae</taxon>
        <taxon>Murinae</taxon>
        <taxon>Rattus</taxon>
    </lineage>
</organism>
<feature type="chain" id="PRO_0000284389" description="Echinoderm microtubule-associated protein-like 2">
    <location>
        <begin position="1"/>
        <end position="649"/>
    </location>
</feature>
<feature type="repeat" description="WD 1">
    <location>
        <begin position="56"/>
        <end position="93"/>
    </location>
</feature>
<feature type="repeat" description="WD 2">
    <location>
        <begin position="97"/>
        <end position="144"/>
    </location>
</feature>
<feature type="repeat" description="WD 3">
    <location>
        <begin position="151"/>
        <end position="192"/>
    </location>
</feature>
<feature type="repeat" description="WD 4">
    <location>
        <begin position="195"/>
        <end position="234"/>
    </location>
</feature>
<feature type="repeat" description="WD 5">
    <location>
        <begin position="241"/>
        <end position="280"/>
    </location>
</feature>
<feature type="repeat" description="WD 6">
    <location>
        <begin position="285"/>
        <end position="323"/>
    </location>
</feature>
<feature type="repeat" description="WD 7">
    <location>
        <begin position="369"/>
        <end position="406"/>
    </location>
</feature>
<feature type="repeat" description="WD 8">
    <location>
        <begin position="410"/>
        <end position="447"/>
    </location>
</feature>
<feature type="repeat" description="WD 9">
    <location>
        <begin position="452"/>
        <end position="489"/>
    </location>
</feature>
<feature type="repeat" description="WD 10">
    <location>
        <begin position="495"/>
        <end position="535"/>
    </location>
</feature>
<feature type="repeat" description="WD 11">
    <location>
        <begin position="564"/>
        <end position="602"/>
    </location>
</feature>
<feature type="repeat" description="WD 12">
    <location>
        <begin position="609"/>
        <end position="648"/>
    </location>
</feature>
<feature type="region of interest" description="Tandem atypical propeller in EMLs" evidence="1">
    <location>
        <begin position="10"/>
        <end position="649"/>
    </location>
</feature>
<feature type="splice variant" id="VSP_024481" description="In isoform 2." evidence="4">
    <location>
        <begin position="1"/>
        <end position="15"/>
    </location>
</feature>
<feature type="sequence conflict" description="In Ref. 1; AAL33537." evidence="5" ref="1">
    <original>GG</original>
    <variation>VW</variation>
    <location>
        <begin position="311"/>
        <end position="312"/>
    </location>
</feature>
<feature type="sequence conflict" description="In Ref. 1; AAL33537." evidence="5" ref="1">
    <original>QG</original>
    <variation>HC</variation>
    <location>
        <begin position="491"/>
        <end position="492"/>
    </location>
</feature>
<dbReference type="EMBL" id="AF335571">
    <property type="protein sequence ID" value="AAL33537.1"/>
    <property type="molecule type" value="mRNA"/>
</dbReference>
<dbReference type="EMBL" id="BC062038">
    <property type="protein sequence ID" value="AAH62038.1"/>
    <property type="molecule type" value="mRNA"/>
</dbReference>
<dbReference type="PIR" id="JC7808">
    <property type="entry name" value="JC7808"/>
</dbReference>
<dbReference type="RefSeq" id="NP_001401579.1">
    <molecule id="Q6P6T4-1"/>
    <property type="nucleotide sequence ID" value="NM_001414650.1"/>
</dbReference>
<dbReference type="RefSeq" id="NP_620276.1">
    <property type="nucleotide sequence ID" value="NM_138921.1"/>
</dbReference>
<dbReference type="SMR" id="Q6P6T4"/>
<dbReference type="BioGRID" id="251413">
    <property type="interactions" value="1"/>
</dbReference>
<dbReference type="FunCoup" id="Q6P6T4">
    <property type="interactions" value="531"/>
</dbReference>
<dbReference type="IntAct" id="Q6P6T4">
    <property type="interactions" value="1"/>
</dbReference>
<dbReference type="STRING" id="10116.ENSRNOP00000075212"/>
<dbReference type="iPTMnet" id="Q6P6T4"/>
<dbReference type="PhosphoSitePlus" id="Q6P6T4"/>
<dbReference type="jPOST" id="Q6P6T4"/>
<dbReference type="PaxDb" id="10116-ENSRNOP00000046691"/>
<dbReference type="GeneID" id="192360"/>
<dbReference type="KEGG" id="rno:192360"/>
<dbReference type="AGR" id="RGD:621066"/>
<dbReference type="CTD" id="24139"/>
<dbReference type="RGD" id="621066">
    <property type="gene designation" value="Eml2"/>
</dbReference>
<dbReference type="VEuPathDB" id="HostDB:ENSRNOG00000030127"/>
<dbReference type="eggNOG" id="KOG2106">
    <property type="taxonomic scope" value="Eukaryota"/>
</dbReference>
<dbReference type="HOGENOM" id="CLU_011754_2_0_1"/>
<dbReference type="InParanoid" id="Q6P6T4"/>
<dbReference type="PhylomeDB" id="Q6P6T4"/>
<dbReference type="PRO" id="PR:Q6P6T4"/>
<dbReference type="Proteomes" id="UP000002494">
    <property type="component" value="Chromosome 1"/>
</dbReference>
<dbReference type="Bgee" id="ENSRNOG00000030127">
    <property type="expression patterns" value="Expressed in frontal cortex and 20 other cell types or tissues"/>
</dbReference>
<dbReference type="GO" id="GO:0005737">
    <property type="term" value="C:cytoplasm"/>
    <property type="evidence" value="ECO:0007669"/>
    <property type="project" value="UniProtKB-KW"/>
</dbReference>
<dbReference type="GO" id="GO:0005874">
    <property type="term" value="C:microtubule"/>
    <property type="evidence" value="ECO:0007669"/>
    <property type="project" value="UniProtKB-KW"/>
</dbReference>
<dbReference type="GO" id="GO:0072686">
    <property type="term" value="C:mitotic spindle"/>
    <property type="evidence" value="ECO:0000266"/>
    <property type="project" value="RGD"/>
</dbReference>
<dbReference type="GO" id="GO:0035255">
    <property type="term" value="F:ionotropic glutamate receptor binding"/>
    <property type="evidence" value="ECO:0000314"/>
    <property type="project" value="RGD"/>
</dbReference>
<dbReference type="GO" id="GO:0008017">
    <property type="term" value="F:microtubule binding"/>
    <property type="evidence" value="ECO:0000250"/>
    <property type="project" value="UniProtKB"/>
</dbReference>
<dbReference type="GO" id="GO:0015631">
    <property type="term" value="F:tubulin binding"/>
    <property type="evidence" value="ECO:0000250"/>
    <property type="project" value="UniProtKB"/>
</dbReference>
<dbReference type="GO" id="GO:0000226">
    <property type="term" value="P:microtubule cytoskeleton organization"/>
    <property type="evidence" value="ECO:0000318"/>
    <property type="project" value="GO_Central"/>
</dbReference>
<dbReference type="GO" id="GO:0031115">
    <property type="term" value="P:negative regulation of microtubule polymerization"/>
    <property type="evidence" value="ECO:0000250"/>
    <property type="project" value="UniProtKB"/>
</dbReference>
<dbReference type="GO" id="GO:0010968">
    <property type="term" value="P:regulation of microtubule nucleation"/>
    <property type="evidence" value="ECO:0000250"/>
    <property type="project" value="UniProtKB"/>
</dbReference>
<dbReference type="FunFam" id="2.130.10.10:FF:000011">
    <property type="entry name" value="Echinoderm microtubule-associated protein-like 2 isoform 1"/>
    <property type="match status" value="1"/>
</dbReference>
<dbReference type="FunFam" id="2.130.10.10:FF:000005">
    <property type="entry name" value="Putative echinoderm microtubule-associated protein-like 1"/>
    <property type="match status" value="1"/>
</dbReference>
<dbReference type="Gene3D" id="2.130.10.10">
    <property type="entry name" value="YVTN repeat-like/Quinoprotein amine dehydrogenase"/>
    <property type="match status" value="2"/>
</dbReference>
<dbReference type="InterPro" id="IPR055442">
    <property type="entry name" value="Beta-prop_EML-like_2nd"/>
</dbReference>
<dbReference type="InterPro" id="IPR055439">
    <property type="entry name" value="Beta-prop_EML_1st"/>
</dbReference>
<dbReference type="InterPro" id="IPR005108">
    <property type="entry name" value="HELP"/>
</dbReference>
<dbReference type="InterPro" id="IPR011041">
    <property type="entry name" value="Quinoprot_gluc/sorb_DH_b-prop"/>
</dbReference>
<dbReference type="InterPro" id="IPR011047">
    <property type="entry name" value="Quinoprotein_ADH-like_sf"/>
</dbReference>
<dbReference type="InterPro" id="IPR015943">
    <property type="entry name" value="WD40/YVTN_repeat-like_dom_sf"/>
</dbReference>
<dbReference type="InterPro" id="IPR001680">
    <property type="entry name" value="WD40_rpt"/>
</dbReference>
<dbReference type="InterPro" id="IPR050630">
    <property type="entry name" value="WD_repeat_EMAP"/>
</dbReference>
<dbReference type="PANTHER" id="PTHR13720:SF50">
    <property type="entry name" value="ECHINODERM MICROTUBULE-ASSOCIATED PROTEIN-LIKE 2"/>
    <property type="match status" value="1"/>
</dbReference>
<dbReference type="PANTHER" id="PTHR13720">
    <property type="entry name" value="WD-40 REPEAT PROTEIN"/>
    <property type="match status" value="1"/>
</dbReference>
<dbReference type="Pfam" id="PF23409">
    <property type="entry name" value="Beta-prop_EML"/>
    <property type="match status" value="1"/>
</dbReference>
<dbReference type="Pfam" id="PF23414">
    <property type="entry name" value="Beta-prop_EML_2"/>
    <property type="match status" value="1"/>
</dbReference>
<dbReference type="Pfam" id="PF03451">
    <property type="entry name" value="HELP"/>
    <property type="match status" value="1"/>
</dbReference>
<dbReference type="SMART" id="SM00320">
    <property type="entry name" value="WD40"/>
    <property type="match status" value="11"/>
</dbReference>
<dbReference type="SUPFAM" id="SSF50998">
    <property type="entry name" value="Quinoprotein alcohol dehydrogenase-like"/>
    <property type="match status" value="1"/>
</dbReference>
<dbReference type="SUPFAM" id="SSF50952">
    <property type="entry name" value="Soluble quinoprotein glucose dehydrogenase"/>
    <property type="match status" value="1"/>
</dbReference>
<dbReference type="PROSITE" id="PS50082">
    <property type="entry name" value="WD_REPEATS_2"/>
    <property type="match status" value="5"/>
</dbReference>
<dbReference type="PROSITE" id="PS50294">
    <property type="entry name" value="WD_REPEATS_REGION"/>
    <property type="match status" value="1"/>
</dbReference>
<name>EMAL2_RAT</name>
<comment type="function">
    <text evidence="2">Tubulin binding protein that inhibits microtubule nucleation and growth, resulting in shorter microtubules.</text>
</comment>
<comment type="subunit">
    <text evidence="2 3">Interacts with GRID2 and may also interact with GRID1 (PubMed:11829466). Interacts with EML3 (By similarity). Binds unpolymerized tubulins via its WD repeat region (By similarity).</text>
</comment>
<comment type="subcellular location">
    <subcellularLocation>
        <location evidence="2">Cytoplasm</location>
        <location evidence="2">Cytoskeleton</location>
    </subcellularLocation>
    <subcellularLocation>
        <location evidence="2">Cytoplasm</location>
        <location evidence="2">Cytoskeleton</location>
        <location evidence="2">Spindle</location>
    </subcellularLocation>
    <text evidence="2">Colocalizes with the microtubule cytoskeleton. Colocalizes with the mitotic spindle.</text>
</comment>
<comment type="alternative products">
    <event type="alternative splicing"/>
    <isoform>
        <id>Q6P6T4-1</id>
        <name>1</name>
        <sequence type="displayed"/>
    </isoform>
    <isoform>
        <id>Q6P6T4-2</id>
        <name>2</name>
        <sequence type="described" ref="VSP_024481"/>
    </isoform>
</comment>
<comment type="tissue specificity">
    <text evidence="3">Widely expressed in both brain and peripheral tissues, including brainstem and enrichment in the postsynaptic density, PSD.</text>
</comment>
<comment type="domain">
    <text evidence="1">Contains a tandem atypical propeller in EMLs (TAPE) domain. The N-terminal beta-propeller is formed by canonical WD repeats; in contrast, the second beta-propeller contains one blade that is formed by discontinuous parts of the polypeptide chain (By similarity).</text>
</comment>
<comment type="similarity">
    <text evidence="5">Belongs to the WD repeat EMAP family.</text>
</comment>
<protein>
    <recommendedName>
        <fullName>Echinoderm microtubule-associated protein-like 2</fullName>
        <shortName>EMAP-2</shortName>
    </recommendedName>
</protein>
<keyword id="KW-0025">Alternative splicing</keyword>
<keyword id="KW-0963">Cytoplasm</keyword>
<keyword id="KW-0206">Cytoskeleton</keyword>
<keyword id="KW-0493">Microtubule</keyword>
<keyword id="KW-1185">Reference proteome</keyword>
<keyword id="KW-0677">Repeat</keyword>
<keyword id="KW-0853">WD repeat</keyword>
<gene>
    <name type="primary">Eml2</name>
    <name type="synonym">Emap2</name>
</gene>